<feature type="chain" id="PRO_0000373496" description="Uncharacterized protein H124R">
    <location>
        <begin position="1"/>
        <end position="125"/>
    </location>
</feature>
<proteinExistence type="inferred from homology"/>
<protein>
    <recommendedName>
        <fullName>Uncharacterized protein H124R</fullName>
        <shortName>pH124R</shortName>
    </recommendedName>
</protein>
<organismHost>
    <name type="scientific">Ornithodoros</name>
    <name type="common">relapsing fever ticks</name>
    <dbReference type="NCBI Taxonomy" id="6937"/>
</organismHost>
<organismHost>
    <name type="scientific">Phacochoerus aethiopicus</name>
    <name type="common">Warthog</name>
    <dbReference type="NCBI Taxonomy" id="85517"/>
</organismHost>
<organismHost>
    <name type="scientific">Phacochoerus africanus</name>
    <name type="common">Warthog</name>
    <dbReference type="NCBI Taxonomy" id="41426"/>
</organismHost>
<organismHost>
    <name type="scientific">Potamochoerus larvatus</name>
    <name type="common">Bushpig</name>
    <dbReference type="NCBI Taxonomy" id="273792"/>
</organismHost>
<organismHost>
    <name type="scientific">Sus scrofa</name>
    <name type="common">Pig</name>
    <dbReference type="NCBI Taxonomy" id="9823"/>
</organismHost>
<gene>
    <name type="ordered locus">Ken-127</name>
</gene>
<accession>P0CA30</accession>
<reference key="1">
    <citation type="submission" date="2003-03" db="EMBL/GenBank/DDBJ databases">
        <title>African swine fever virus genomes.</title>
        <authorList>
            <person name="Kutish G.F."/>
            <person name="Rock D.L."/>
        </authorList>
    </citation>
    <scope>NUCLEOTIDE SEQUENCE [LARGE SCALE GENOMIC DNA]</scope>
</reference>
<comment type="subcellular location">
    <subcellularLocation>
        <location evidence="1">Virion</location>
    </subcellularLocation>
</comment>
<comment type="induction">
    <text evidence="2">Expressed in the late phase of the viral replicative cycle.</text>
</comment>
<comment type="similarity">
    <text evidence="2">Belongs to the asfivirus H124R family.</text>
</comment>
<evidence type="ECO:0000250" key="1">
    <source>
        <dbReference type="UniProtKB" id="Q65186"/>
    </source>
</evidence>
<evidence type="ECO:0000305" key="2"/>
<keyword id="KW-0426">Late protein</keyword>
<keyword id="KW-0946">Virion</keyword>
<organism>
    <name type="scientific">African swine fever virus (isolate Pig/Kenya/KEN-50/1950)</name>
    <name type="common">ASFV</name>
    <dbReference type="NCBI Taxonomy" id="561445"/>
    <lineage>
        <taxon>Viruses</taxon>
        <taxon>Varidnaviria</taxon>
        <taxon>Bamfordvirae</taxon>
        <taxon>Nucleocytoviricota</taxon>
        <taxon>Pokkesviricetes</taxon>
        <taxon>Asfuvirales</taxon>
        <taxon>Asfarviridae</taxon>
        <taxon>Asfivirus</taxon>
        <taxon>African swine fever virus</taxon>
    </lineage>
</organism>
<sequence>MNLEYVHVVQKFNQVLLELTKKVCTVVGGNKPTYWYHHIRRVCSECPSMPMSMIGPYLNVYKTQIVTKDKNFFMNFDPPAHNEYTFIIQKLKEAARNMPEDELEQYWAKLLFLLKSYIKCKPFIN</sequence>
<name>VF124_ASFK5</name>
<dbReference type="EMBL" id="AY261360">
    <property type="status" value="NOT_ANNOTATED_CDS"/>
    <property type="molecule type" value="Genomic_DNA"/>
</dbReference>
<dbReference type="SMR" id="P0CA30"/>
<dbReference type="Proteomes" id="UP000000861">
    <property type="component" value="Segment"/>
</dbReference>
<dbReference type="GO" id="GO:0044423">
    <property type="term" value="C:virion component"/>
    <property type="evidence" value="ECO:0007669"/>
    <property type="project" value="UniProtKB-KW"/>
</dbReference>